<reference key="1">
    <citation type="journal article" date="2007" name="J. Bacteriol.">
        <title>Genome sequence of Avery's virulent serotype 2 strain D39 of Streptococcus pneumoniae and comparison with that of unencapsulated laboratory strain R6.</title>
        <authorList>
            <person name="Lanie J.A."/>
            <person name="Ng W.-L."/>
            <person name="Kazmierczak K.M."/>
            <person name="Andrzejewski T.M."/>
            <person name="Davidsen T.M."/>
            <person name="Wayne K.J."/>
            <person name="Tettelin H."/>
            <person name="Glass J.I."/>
            <person name="Winkler M.E."/>
        </authorList>
    </citation>
    <scope>NUCLEOTIDE SEQUENCE [LARGE SCALE GENOMIC DNA]</scope>
    <source>
        <strain>D39 / NCTC 7466</strain>
    </source>
</reference>
<gene>
    <name evidence="1" type="primary">fabH</name>
    <name type="ordered locus">SPD_0380</name>
</gene>
<sequence>MAFAKISQVAHYVPEQVVTNHDLAQIMDTNDEWISSRTGIRQRHISRTESTSDLATEVAKKLMAKAGITGEELDFIILATITPDSMMPSTAARVQANIGANKAFAFDLTAACSGFVFALSTAEKFIASGRFQKGLVIGSETLSKAVDWSDRSTAVLFGDGAGGVLLEASEQEHFLAESLNSDGSRSECLTYGHSGLHSPFSDQESADSFLKMDGRTVFDFAIRDVAKSIKQTIDESPIEVTDLDYLLLHQANDRILDKMARKIGVDRAKLPANMMEYGNTSAASIPILLSECVEQGLIPLDGSQTVLLSGFGGGLTWGTLILTI</sequence>
<accession>Q04M58</accession>
<keyword id="KW-0012">Acyltransferase</keyword>
<keyword id="KW-0963">Cytoplasm</keyword>
<keyword id="KW-0275">Fatty acid biosynthesis</keyword>
<keyword id="KW-0276">Fatty acid metabolism</keyword>
<keyword id="KW-0444">Lipid biosynthesis</keyword>
<keyword id="KW-0443">Lipid metabolism</keyword>
<keyword id="KW-0511">Multifunctional enzyme</keyword>
<keyword id="KW-1185">Reference proteome</keyword>
<keyword id="KW-0808">Transferase</keyword>
<name>FABH_STRP2</name>
<proteinExistence type="inferred from homology"/>
<organism>
    <name type="scientific">Streptococcus pneumoniae serotype 2 (strain D39 / NCTC 7466)</name>
    <dbReference type="NCBI Taxonomy" id="373153"/>
    <lineage>
        <taxon>Bacteria</taxon>
        <taxon>Bacillati</taxon>
        <taxon>Bacillota</taxon>
        <taxon>Bacilli</taxon>
        <taxon>Lactobacillales</taxon>
        <taxon>Streptococcaceae</taxon>
        <taxon>Streptococcus</taxon>
    </lineage>
</organism>
<protein>
    <recommendedName>
        <fullName evidence="1">Beta-ketoacyl-[acyl-carrier-protein] synthase III</fullName>
        <shortName evidence="1">Beta-ketoacyl-ACP synthase III</shortName>
        <shortName evidence="1">KAS III</shortName>
        <ecNumber evidence="1">2.3.1.180</ecNumber>
    </recommendedName>
    <alternativeName>
        <fullName evidence="1">3-oxoacyl-[acyl-carrier-protein] synthase 3</fullName>
    </alternativeName>
    <alternativeName>
        <fullName evidence="1">3-oxoacyl-[acyl-carrier-protein] synthase III</fullName>
    </alternativeName>
</protein>
<dbReference type="EC" id="2.3.1.180" evidence="1"/>
<dbReference type="EMBL" id="CP000410">
    <property type="protein sequence ID" value="ABJ54296.1"/>
    <property type="molecule type" value="Genomic_DNA"/>
</dbReference>
<dbReference type="RefSeq" id="WP_000852948.1">
    <property type="nucleotide sequence ID" value="NZ_JAMLJR010000009.1"/>
</dbReference>
<dbReference type="SMR" id="Q04M58"/>
<dbReference type="PaxDb" id="373153-SPD_0380"/>
<dbReference type="KEGG" id="spd:SPD_0380"/>
<dbReference type="eggNOG" id="COG0332">
    <property type="taxonomic scope" value="Bacteria"/>
</dbReference>
<dbReference type="HOGENOM" id="CLU_039592_4_1_9"/>
<dbReference type="BioCyc" id="SPNE373153:G1G6V-418-MONOMER"/>
<dbReference type="UniPathway" id="UPA00094"/>
<dbReference type="Proteomes" id="UP000001452">
    <property type="component" value="Chromosome"/>
</dbReference>
<dbReference type="GO" id="GO:0005737">
    <property type="term" value="C:cytoplasm"/>
    <property type="evidence" value="ECO:0007669"/>
    <property type="project" value="UniProtKB-SubCell"/>
</dbReference>
<dbReference type="GO" id="GO:0004315">
    <property type="term" value="F:3-oxoacyl-[acyl-carrier-protein] synthase activity"/>
    <property type="evidence" value="ECO:0007669"/>
    <property type="project" value="InterPro"/>
</dbReference>
<dbReference type="GO" id="GO:0033818">
    <property type="term" value="F:beta-ketoacyl-acyl-carrier-protein synthase III activity"/>
    <property type="evidence" value="ECO:0007669"/>
    <property type="project" value="UniProtKB-UniRule"/>
</dbReference>
<dbReference type="GO" id="GO:0006633">
    <property type="term" value="P:fatty acid biosynthetic process"/>
    <property type="evidence" value="ECO:0007669"/>
    <property type="project" value="UniProtKB-UniRule"/>
</dbReference>
<dbReference type="CDD" id="cd00830">
    <property type="entry name" value="KAS_III"/>
    <property type="match status" value="1"/>
</dbReference>
<dbReference type="Gene3D" id="3.40.47.10">
    <property type="match status" value="1"/>
</dbReference>
<dbReference type="HAMAP" id="MF_01815">
    <property type="entry name" value="FabH"/>
    <property type="match status" value="1"/>
</dbReference>
<dbReference type="InterPro" id="IPR013747">
    <property type="entry name" value="ACP_syn_III_C"/>
</dbReference>
<dbReference type="InterPro" id="IPR013751">
    <property type="entry name" value="ACP_syn_III_N"/>
</dbReference>
<dbReference type="InterPro" id="IPR004655">
    <property type="entry name" value="FabH"/>
</dbReference>
<dbReference type="InterPro" id="IPR016039">
    <property type="entry name" value="Thiolase-like"/>
</dbReference>
<dbReference type="NCBIfam" id="TIGR00747">
    <property type="entry name" value="fabH"/>
    <property type="match status" value="1"/>
</dbReference>
<dbReference type="NCBIfam" id="NF006829">
    <property type="entry name" value="PRK09352.1"/>
    <property type="match status" value="1"/>
</dbReference>
<dbReference type="PANTHER" id="PTHR43091">
    <property type="entry name" value="3-OXOACYL-[ACYL-CARRIER-PROTEIN] SYNTHASE"/>
    <property type="match status" value="1"/>
</dbReference>
<dbReference type="PANTHER" id="PTHR43091:SF1">
    <property type="entry name" value="BETA-KETOACYL-[ACYL-CARRIER-PROTEIN] SYNTHASE III, CHLOROPLASTIC"/>
    <property type="match status" value="1"/>
</dbReference>
<dbReference type="Pfam" id="PF08545">
    <property type="entry name" value="ACP_syn_III"/>
    <property type="match status" value="1"/>
</dbReference>
<dbReference type="Pfam" id="PF08541">
    <property type="entry name" value="ACP_syn_III_C"/>
    <property type="match status" value="1"/>
</dbReference>
<dbReference type="SUPFAM" id="SSF53901">
    <property type="entry name" value="Thiolase-like"/>
    <property type="match status" value="1"/>
</dbReference>
<evidence type="ECO:0000255" key="1">
    <source>
        <dbReference type="HAMAP-Rule" id="MF_01815"/>
    </source>
</evidence>
<feature type="chain" id="PRO_1000056419" description="Beta-ketoacyl-[acyl-carrier-protein] synthase III">
    <location>
        <begin position="1"/>
        <end position="324"/>
    </location>
</feature>
<feature type="region of interest" description="ACP-binding" evidence="1">
    <location>
        <begin position="250"/>
        <end position="254"/>
    </location>
</feature>
<feature type="active site" evidence="1">
    <location>
        <position position="112"/>
    </location>
</feature>
<feature type="active site" evidence="1">
    <location>
        <position position="249"/>
    </location>
</feature>
<feature type="active site" evidence="1">
    <location>
        <position position="279"/>
    </location>
</feature>
<comment type="function">
    <text evidence="1">Catalyzes the condensation reaction of fatty acid synthesis by the addition to an acyl acceptor of two carbons from malonyl-ACP. Catalyzes the first condensation reaction which initiates fatty acid synthesis and may therefore play a role in governing the total rate of fatty acid production. Possesses both acetoacetyl-ACP synthase and acetyl transacylase activities. Its substrate specificity determines the biosynthesis of branched-chain and/or straight-chain of fatty acids.</text>
</comment>
<comment type="catalytic activity">
    <reaction evidence="1">
        <text>malonyl-[ACP] + acetyl-CoA + H(+) = 3-oxobutanoyl-[ACP] + CO2 + CoA</text>
        <dbReference type="Rhea" id="RHEA:12080"/>
        <dbReference type="Rhea" id="RHEA-COMP:9623"/>
        <dbReference type="Rhea" id="RHEA-COMP:9625"/>
        <dbReference type="ChEBI" id="CHEBI:15378"/>
        <dbReference type="ChEBI" id="CHEBI:16526"/>
        <dbReference type="ChEBI" id="CHEBI:57287"/>
        <dbReference type="ChEBI" id="CHEBI:57288"/>
        <dbReference type="ChEBI" id="CHEBI:78449"/>
        <dbReference type="ChEBI" id="CHEBI:78450"/>
        <dbReference type="EC" id="2.3.1.180"/>
    </reaction>
</comment>
<comment type="pathway">
    <text evidence="1">Lipid metabolism; fatty acid biosynthesis.</text>
</comment>
<comment type="subunit">
    <text evidence="1">Homodimer.</text>
</comment>
<comment type="subcellular location">
    <subcellularLocation>
        <location evidence="1">Cytoplasm</location>
    </subcellularLocation>
</comment>
<comment type="domain">
    <text evidence="1">The last Arg residue of the ACP-binding site is essential for the weak association between ACP/AcpP and FabH.</text>
</comment>
<comment type="similarity">
    <text evidence="1">Belongs to the thiolase-like superfamily. FabH family.</text>
</comment>